<name>TX20A_LYCSI</name>
<evidence type="ECO:0000250" key="1"/>
<evidence type="ECO:0000250" key="2">
    <source>
        <dbReference type="UniProtKB" id="P30288"/>
    </source>
</evidence>
<evidence type="ECO:0000255" key="3"/>
<evidence type="ECO:0000305" key="4"/>
<evidence type="ECO:0000305" key="5">
    <source>
    </source>
</evidence>
<feature type="signal peptide" evidence="3">
    <location>
        <begin position="1"/>
        <end position="22"/>
    </location>
</feature>
<feature type="propeptide" id="PRO_0000401899" evidence="1">
    <location>
        <begin position="23"/>
        <end position="34"/>
    </location>
</feature>
<feature type="chain" id="PRO_0000401900" description="U17-lycotoxin-Ls1a">
    <location>
        <begin position="35"/>
        <end position="81"/>
    </location>
</feature>
<feature type="disulfide bond" evidence="2">
    <location>
        <begin position="36"/>
        <end position="51"/>
    </location>
</feature>
<feature type="disulfide bond" evidence="2">
    <location>
        <begin position="50"/>
        <end position="67"/>
    </location>
</feature>
<feature type="disulfide bond" evidence="2">
    <location>
        <begin position="58"/>
        <end position="65"/>
    </location>
</feature>
<sequence length="81" mass="8977">MSSKVQAVLLLVGVITFLAVHAQEELSENTESERSCARLYERCSMTRRPCCNNVPYVCSLLGTYCECKKGLIQTVGDFIGI</sequence>
<reference key="1">
    <citation type="journal article" date="2010" name="Zoology">
        <title>Transcriptome analysis of the venom glands of the Chinese wolf spider Lycosa singoriensis.</title>
        <authorList>
            <person name="Zhang Y."/>
            <person name="Chen J."/>
            <person name="Tang X."/>
            <person name="Wang F."/>
            <person name="Jiang L."/>
            <person name="Xiong X."/>
            <person name="Wang M."/>
            <person name="Rong M."/>
            <person name="Liu Z."/>
            <person name="Liang S."/>
        </authorList>
    </citation>
    <scope>NUCLEOTIDE SEQUENCE [LARGE SCALE MRNA]</scope>
    <source>
        <tissue>Venom gland</tissue>
    </source>
</reference>
<organism>
    <name type="scientific">Lycosa singoriensis</name>
    <name type="common">Wolf spider</name>
    <name type="synonym">Aranea singoriensis</name>
    <dbReference type="NCBI Taxonomy" id="434756"/>
    <lineage>
        <taxon>Eukaryota</taxon>
        <taxon>Metazoa</taxon>
        <taxon>Ecdysozoa</taxon>
        <taxon>Arthropoda</taxon>
        <taxon>Chelicerata</taxon>
        <taxon>Arachnida</taxon>
        <taxon>Araneae</taxon>
        <taxon>Araneomorphae</taxon>
        <taxon>Entelegynae</taxon>
        <taxon>Lycosoidea</taxon>
        <taxon>Lycosidae</taxon>
        <taxon>Lycosa</taxon>
    </lineage>
</organism>
<comment type="subcellular location">
    <subcellularLocation>
        <location evidence="5">Secreted</location>
    </subcellularLocation>
</comment>
<comment type="tissue specificity">
    <text evidence="5">Expressed by the venom gland.</text>
</comment>
<comment type="domain">
    <text evidence="2">The presence of a 'disulfide through disulfide knot' structurally defines this protein as a knottin.</text>
</comment>
<comment type="similarity">
    <text evidence="4">Belongs to the neurotoxin 02 (plectoxin) family.</text>
</comment>
<dbReference type="EMBL" id="EU926138">
    <property type="protein sequence ID" value="ACI41470.1"/>
    <property type="molecule type" value="mRNA"/>
</dbReference>
<dbReference type="EMBL" id="FM864142">
    <property type="protein sequence ID" value="CAS03739.1"/>
    <property type="molecule type" value="mRNA"/>
</dbReference>
<dbReference type="ArachnoServer" id="AS001077">
    <property type="toxin name" value="U17-lycotoxin-Ls1a"/>
</dbReference>
<dbReference type="GO" id="GO:0005576">
    <property type="term" value="C:extracellular region"/>
    <property type="evidence" value="ECO:0007669"/>
    <property type="project" value="UniProtKB-SubCell"/>
</dbReference>
<dbReference type="GO" id="GO:0008200">
    <property type="term" value="F:ion channel inhibitor activity"/>
    <property type="evidence" value="ECO:0007669"/>
    <property type="project" value="InterPro"/>
</dbReference>
<dbReference type="GO" id="GO:0090729">
    <property type="term" value="F:toxin activity"/>
    <property type="evidence" value="ECO:0007669"/>
    <property type="project" value="UniProtKB-KW"/>
</dbReference>
<dbReference type="CDD" id="cd12960">
    <property type="entry name" value="Spider_toxin"/>
    <property type="match status" value="1"/>
</dbReference>
<dbReference type="Gene3D" id="4.10.40.10">
    <property type="match status" value="1"/>
</dbReference>
<dbReference type="InterPro" id="IPR004169">
    <property type="entry name" value="Spidertoxin"/>
</dbReference>
<dbReference type="Pfam" id="PF02819">
    <property type="entry name" value="Toxin_9"/>
    <property type="match status" value="1"/>
</dbReference>
<dbReference type="SUPFAM" id="SSF57059">
    <property type="entry name" value="omega toxin-like"/>
    <property type="match status" value="1"/>
</dbReference>
<proteinExistence type="inferred from homology"/>
<protein>
    <recommendedName>
        <fullName evidence="4">U17-lycotoxin-Ls1a</fullName>
        <shortName evidence="4">U17-LCTX-Ls1a</shortName>
    </recommendedName>
    <alternativeName>
        <fullName>Toxin-like structure LSTX-P3</fullName>
    </alternativeName>
</protein>
<keyword id="KW-1015">Disulfide bond</keyword>
<keyword id="KW-0960">Knottin</keyword>
<keyword id="KW-0964">Secreted</keyword>
<keyword id="KW-0732">Signal</keyword>
<keyword id="KW-0800">Toxin</keyword>
<accession>B6DD54</accession>